<keyword id="KW-0238">DNA-binding</keyword>
<keyword id="KW-0804">Transcription</keyword>
<keyword id="KW-0805">Transcription regulation</keyword>
<gene>
    <name evidence="1" type="primary">yidZ</name>
    <name type="ordered locus">ECSE_3997</name>
</gene>
<reference key="1">
    <citation type="journal article" date="2008" name="DNA Res.">
        <title>Complete genome sequence and comparative analysis of the wild-type commensal Escherichia coli strain SE11 isolated from a healthy adult.</title>
        <authorList>
            <person name="Oshima K."/>
            <person name="Toh H."/>
            <person name="Ogura Y."/>
            <person name="Sasamoto H."/>
            <person name="Morita H."/>
            <person name="Park S.-H."/>
            <person name="Ooka T."/>
            <person name="Iyoda S."/>
            <person name="Taylor T.D."/>
            <person name="Hayashi T."/>
            <person name="Itoh K."/>
            <person name="Hattori M."/>
        </authorList>
    </citation>
    <scope>NUCLEOTIDE SEQUENCE [LARGE SCALE GENOMIC DNA]</scope>
    <source>
        <strain>SE11</strain>
    </source>
</reference>
<sequence>MKKSITTLDLNLLLCLQLLMQERSVTKAAKRMNVTPSAVSKSLAKLRAWFDDPLFVNSPLGLSPTPLMVSMEQNLAEWMQMSNLLLDKPHHQTPRGLKFELAAESPLMMIMLNALSKRIYQRYPQATIKLRNWDYDSLDAITRGEVDIGFSGRESHPRSRELLSSLPLAIDYEVLFSDVPCVWLRKDHPALHETWNLDTFLRYPHISICWEQSDTWALDNVLQELGRERTIAMSLPEFEQSLFMAAQPDNLLLATAPRYCQYYNQLHQLPLVALPLPFDESQQKKLEVPFTLLWHKRNSHNPKIVWLRETIKNLYASMA</sequence>
<accession>B6I3U4</accession>
<comment type="function">
    <text evidence="1">Involved in anaerobic NO protection.</text>
</comment>
<comment type="similarity">
    <text evidence="2">Belongs to the LysR transcriptional regulatory family.</text>
</comment>
<proteinExistence type="inferred from homology"/>
<name>YIDZ_ECOSE</name>
<dbReference type="EMBL" id="AP009240">
    <property type="protein sequence ID" value="BAG79521.1"/>
    <property type="molecule type" value="Genomic_DNA"/>
</dbReference>
<dbReference type="RefSeq" id="WP_000748502.1">
    <property type="nucleotide sequence ID" value="NC_011415.1"/>
</dbReference>
<dbReference type="SMR" id="B6I3U4"/>
<dbReference type="GeneID" id="93778452"/>
<dbReference type="KEGG" id="ecy:ECSE_3997"/>
<dbReference type="HOGENOM" id="CLU_039613_39_2_6"/>
<dbReference type="Proteomes" id="UP000008199">
    <property type="component" value="Chromosome"/>
</dbReference>
<dbReference type="GO" id="GO:0003677">
    <property type="term" value="F:DNA binding"/>
    <property type="evidence" value="ECO:0007669"/>
    <property type="project" value="UniProtKB-KW"/>
</dbReference>
<dbReference type="GO" id="GO:0003700">
    <property type="term" value="F:DNA-binding transcription factor activity"/>
    <property type="evidence" value="ECO:0007669"/>
    <property type="project" value="UniProtKB-UniRule"/>
</dbReference>
<dbReference type="CDD" id="cd08417">
    <property type="entry name" value="PBP2_Nitroaromatics_like"/>
    <property type="match status" value="1"/>
</dbReference>
<dbReference type="FunFam" id="3.40.190.10:FF:000092">
    <property type="entry name" value="HTH-type transcriptional regulator YidZ"/>
    <property type="match status" value="1"/>
</dbReference>
<dbReference type="Gene3D" id="3.40.190.10">
    <property type="entry name" value="Periplasmic binding protein-like II"/>
    <property type="match status" value="2"/>
</dbReference>
<dbReference type="Gene3D" id="1.10.10.10">
    <property type="entry name" value="Winged helix-like DNA-binding domain superfamily/Winged helix DNA-binding domain"/>
    <property type="match status" value="1"/>
</dbReference>
<dbReference type="HAMAP" id="MF_01607">
    <property type="entry name" value="HTH_type_YidZ"/>
    <property type="match status" value="1"/>
</dbReference>
<dbReference type="InterPro" id="IPR050389">
    <property type="entry name" value="LysR-type_TF"/>
</dbReference>
<dbReference type="InterPro" id="IPR005119">
    <property type="entry name" value="LysR_subst-bd"/>
</dbReference>
<dbReference type="InterPro" id="IPR000847">
    <property type="entry name" value="Tscrpt_reg_HTH_LysR"/>
</dbReference>
<dbReference type="InterPro" id="IPR023746">
    <property type="entry name" value="Tscrpt_reg_YidZ"/>
</dbReference>
<dbReference type="InterPro" id="IPR036388">
    <property type="entry name" value="WH-like_DNA-bd_sf"/>
</dbReference>
<dbReference type="InterPro" id="IPR036390">
    <property type="entry name" value="WH_DNA-bd_sf"/>
</dbReference>
<dbReference type="InterPro" id="IPR037402">
    <property type="entry name" value="YidZ_PBP2"/>
</dbReference>
<dbReference type="NCBIfam" id="NF007581">
    <property type="entry name" value="PRK10216.1"/>
    <property type="match status" value="1"/>
</dbReference>
<dbReference type="PANTHER" id="PTHR30118">
    <property type="entry name" value="HTH-TYPE TRANSCRIPTIONAL REGULATOR LEUO-RELATED"/>
    <property type="match status" value="1"/>
</dbReference>
<dbReference type="PANTHER" id="PTHR30118:SF11">
    <property type="entry name" value="HTH-TYPE TRANSCRIPTIONAL REGULATOR YIDZ"/>
    <property type="match status" value="1"/>
</dbReference>
<dbReference type="Pfam" id="PF00126">
    <property type="entry name" value="HTH_1"/>
    <property type="match status" value="1"/>
</dbReference>
<dbReference type="Pfam" id="PF03466">
    <property type="entry name" value="LysR_substrate"/>
    <property type="match status" value="1"/>
</dbReference>
<dbReference type="SUPFAM" id="SSF53850">
    <property type="entry name" value="Periplasmic binding protein-like II"/>
    <property type="match status" value="1"/>
</dbReference>
<dbReference type="SUPFAM" id="SSF46785">
    <property type="entry name" value="Winged helix' DNA-binding domain"/>
    <property type="match status" value="1"/>
</dbReference>
<dbReference type="PROSITE" id="PS50931">
    <property type="entry name" value="HTH_LYSR"/>
    <property type="match status" value="1"/>
</dbReference>
<feature type="chain" id="PRO_1000148197" description="HTH-type transcriptional regulator YidZ">
    <location>
        <begin position="1"/>
        <end position="319"/>
    </location>
</feature>
<feature type="domain" description="HTH lysR-type" evidence="1">
    <location>
        <begin position="8"/>
        <end position="65"/>
    </location>
</feature>
<feature type="DNA-binding region" description="H-T-H motif" evidence="1">
    <location>
        <begin position="25"/>
        <end position="44"/>
    </location>
</feature>
<protein>
    <recommendedName>
        <fullName evidence="1">HTH-type transcriptional regulator YidZ</fullName>
    </recommendedName>
</protein>
<organism>
    <name type="scientific">Escherichia coli (strain SE11)</name>
    <dbReference type="NCBI Taxonomy" id="409438"/>
    <lineage>
        <taxon>Bacteria</taxon>
        <taxon>Pseudomonadati</taxon>
        <taxon>Pseudomonadota</taxon>
        <taxon>Gammaproteobacteria</taxon>
        <taxon>Enterobacterales</taxon>
        <taxon>Enterobacteriaceae</taxon>
        <taxon>Escherichia</taxon>
    </lineage>
</organism>
<evidence type="ECO:0000255" key="1">
    <source>
        <dbReference type="HAMAP-Rule" id="MF_01607"/>
    </source>
</evidence>
<evidence type="ECO:0000305" key="2"/>